<dbReference type="EMBL" id="X56157">
    <property type="protein sequence ID" value="CAA39625.1"/>
    <property type="molecule type" value="Genomic_DNA"/>
</dbReference>
<dbReference type="PIR" id="S13870">
    <property type="entry name" value="S13870"/>
</dbReference>
<dbReference type="PDB" id="2FYN">
    <property type="method" value="X-ray"/>
    <property type="resolution" value="3.20 A"/>
    <property type="chains" value="B/E/H/K/N/Q=23-285"/>
</dbReference>
<dbReference type="PDB" id="2QJK">
    <property type="method" value="X-ray"/>
    <property type="resolution" value="3.10 A"/>
    <property type="chains" value="B/E/H/K/N/Q=23-278"/>
</dbReference>
<dbReference type="PDB" id="2QJP">
    <property type="method" value="X-ray"/>
    <property type="resolution" value="2.60 A"/>
    <property type="chains" value="B/E/H/K=23-278"/>
</dbReference>
<dbReference type="PDB" id="2QJY">
    <property type="method" value="X-ray"/>
    <property type="resolution" value="2.40 A"/>
    <property type="chains" value="B/E/H/K/N/Q=23-285"/>
</dbReference>
<dbReference type="PDB" id="5KKZ">
    <property type="method" value="X-ray"/>
    <property type="resolution" value="2.97 A"/>
    <property type="chains" value="B/F/L/P=23-285"/>
</dbReference>
<dbReference type="PDB" id="5KLI">
    <property type="method" value="X-ray"/>
    <property type="resolution" value="3.00 A"/>
    <property type="chains" value="B/F/L/P=23-285"/>
</dbReference>
<dbReference type="PDB" id="7TCE">
    <property type="method" value="X-ray"/>
    <property type="resolution" value="3.85 A"/>
    <property type="chains" value="B/F/L/P=23-285"/>
</dbReference>
<dbReference type="PDB" id="7TLJ">
    <property type="method" value="EM"/>
    <property type="resolution" value="2.91 A"/>
    <property type="chains" value="B/F=23-285"/>
</dbReference>
<dbReference type="PDBsum" id="2FYN"/>
<dbReference type="PDBsum" id="2QJK"/>
<dbReference type="PDBsum" id="2QJP"/>
<dbReference type="PDBsum" id="2QJY"/>
<dbReference type="PDBsum" id="5KKZ"/>
<dbReference type="PDBsum" id="5KLI"/>
<dbReference type="PDBsum" id="7TCE"/>
<dbReference type="PDBsum" id="7TLJ"/>
<dbReference type="EMDB" id="EMD-25989"/>
<dbReference type="SMR" id="Q02760"/>
<dbReference type="DIP" id="DIP-61257N"/>
<dbReference type="IntAct" id="Q02760">
    <property type="interactions" value="2"/>
</dbReference>
<dbReference type="DrugBank" id="DB03152">
    <property type="generic name" value="B-2-Octylglucoside"/>
</dbReference>
<dbReference type="DrugBank" id="DB08690">
    <property type="generic name" value="Ubiquinone Q2"/>
</dbReference>
<dbReference type="EvolutionaryTrace" id="Q02760"/>
<dbReference type="GO" id="GO:0005886">
    <property type="term" value="C:plasma membrane"/>
    <property type="evidence" value="ECO:0007669"/>
    <property type="project" value="UniProtKB-SubCell"/>
</dbReference>
<dbReference type="GO" id="GO:0009055">
    <property type="term" value="F:electron transfer activity"/>
    <property type="evidence" value="ECO:0007669"/>
    <property type="project" value="InterPro"/>
</dbReference>
<dbReference type="GO" id="GO:0020037">
    <property type="term" value="F:heme binding"/>
    <property type="evidence" value="ECO:0007669"/>
    <property type="project" value="InterPro"/>
</dbReference>
<dbReference type="GO" id="GO:0046872">
    <property type="term" value="F:metal ion binding"/>
    <property type="evidence" value="ECO:0007669"/>
    <property type="project" value="UniProtKB-KW"/>
</dbReference>
<dbReference type="Gene3D" id="1.10.760.10">
    <property type="entry name" value="Cytochrome c-like domain"/>
    <property type="match status" value="1"/>
</dbReference>
<dbReference type="Gene3D" id="1.20.5.100">
    <property type="entry name" value="Cytochrome c1, transmembrane anchor, C-terminal"/>
    <property type="match status" value="1"/>
</dbReference>
<dbReference type="InterPro" id="IPR009056">
    <property type="entry name" value="Cyt_c-like_dom"/>
</dbReference>
<dbReference type="InterPro" id="IPR036909">
    <property type="entry name" value="Cyt_c-like_dom_sf"/>
</dbReference>
<dbReference type="InterPro" id="IPR002326">
    <property type="entry name" value="Cyt_c1"/>
</dbReference>
<dbReference type="PANTHER" id="PTHR10266">
    <property type="entry name" value="CYTOCHROME C1"/>
    <property type="match status" value="1"/>
</dbReference>
<dbReference type="PANTHER" id="PTHR10266:SF3">
    <property type="entry name" value="CYTOCHROME C1, HEME PROTEIN, MITOCHONDRIAL"/>
    <property type="match status" value="1"/>
</dbReference>
<dbReference type="Pfam" id="PF02167">
    <property type="entry name" value="Cytochrom_C1"/>
    <property type="match status" value="1"/>
</dbReference>
<dbReference type="PRINTS" id="PR00603">
    <property type="entry name" value="CYTOCHROMEC1"/>
</dbReference>
<dbReference type="SUPFAM" id="SSF46626">
    <property type="entry name" value="Cytochrome c"/>
    <property type="match status" value="1"/>
</dbReference>
<dbReference type="PROSITE" id="PS51007">
    <property type="entry name" value="CYTC"/>
    <property type="match status" value="1"/>
</dbReference>
<proteinExistence type="evidence at protein level"/>
<sequence>MIRKLTLTAATALALSGGAAMAAGGGHVEDVPFSFEGPFGTFDQHQLQRGLQVYTEVCAACHGMKFVPIRSLSEPGGPELPEDQVRAYATQFTVTDEETGEDREGKPTDHFPHSALENAADLSLMAKARAGFHGPMGTGISQLFNGIGGPEYIYSVLTGFPEEPPKCAEGHEPDGFYYNRAFQNGSVPDTCKDANGVKTTAGSWIAMPPPLMDDLVEYADGHDASVHAMAEDVSAFLMWAAEPKLMARKQAGFTAVMFLTVLSVLLYLTNKRLWAGVKGKKKTNV</sequence>
<organism>
    <name type="scientific">Cereibacter sphaeroides</name>
    <name type="common">Rhodobacter sphaeroides</name>
    <dbReference type="NCBI Taxonomy" id="1063"/>
    <lineage>
        <taxon>Bacteria</taxon>
        <taxon>Pseudomonadati</taxon>
        <taxon>Pseudomonadota</taxon>
        <taxon>Alphaproteobacteria</taxon>
        <taxon>Rhodobacterales</taxon>
        <taxon>Paracoccaceae</taxon>
        <taxon>Cereibacter</taxon>
    </lineage>
</organism>
<keyword id="KW-0002">3D-structure</keyword>
<keyword id="KW-1003">Cell membrane</keyword>
<keyword id="KW-0249">Electron transport</keyword>
<keyword id="KW-0349">Heme</keyword>
<keyword id="KW-0408">Iron</keyword>
<keyword id="KW-0472">Membrane</keyword>
<keyword id="KW-0479">Metal-binding</keyword>
<keyword id="KW-0679">Respiratory chain</keyword>
<keyword id="KW-0732">Signal</keyword>
<keyword id="KW-0812">Transmembrane</keyword>
<keyword id="KW-1133">Transmembrane helix</keyword>
<keyword id="KW-0813">Transport</keyword>
<evidence type="ECO:0000255" key="1"/>
<evidence type="ECO:0000255" key="2">
    <source>
        <dbReference type="PROSITE-ProRule" id="PRU00433"/>
    </source>
</evidence>
<evidence type="ECO:0000269" key="3">
    <source>
    </source>
</evidence>
<evidence type="ECO:0000305" key="4"/>
<evidence type="ECO:0007829" key="5">
    <source>
        <dbReference type="PDB" id="2FYN"/>
    </source>
</evidence>
<evidence type="ECO:0007829" key="6">
    <source>
        <dbReference type="PDB" id="2QJY"/>
    </source>
</evidence>
<evidence type="ECO:0007829" key="7">
    <source>
        <dbReference type="PDB" id="7TLJ"/>
    </source>
</evidence>
<gene>
    <name type="primary">petC</name>
    <name type="synonym">fbcC</name>
</gene>
<reference key="1">
    <citation type="journal article" date="1990" name="Eur. J. Biochem.">
        <title>Cloning and DNA sequencing of the fbc operon encoding the cytochrome bc1 complex from Rhodobacter sphaeroides. Characterization of fbc deletion mutants and complementation by a site-specific mutational variant.</title>
        <authorList>
            <person name="Yun C.-H."/>
            <person name="Beci R."/>
            <person name="Crofts A.R."/>
            <person name="Kaplan S."/>
            <person name="Gennis R.B."/>
        </authorList>
    </citation>
    <scope>NUCLEOTIDE SEQUENCE [GENOMIC DNA]</scope>
</reference>
<name>CY1_CERSP</name>
<comment type="function">
    <text>Component of the ubiquinol-cytochrome c reductase complex (complex III or cytochrome b-c1 complex), which is a respiratory chain that generates an electrochemical potential coupled to ATP synthesis. c1 functions as an electron donor to cytochrome c.</text>
</comment>
<comment type="subunit">
    <text>The main subunits of complex b-c1 are: cytochrome b, cytochrome c1 and the Rieske protein.</text>
</comment>
<comment type="subcellular location">
    <subcellularLocation>
        <location evidence="4">Cell membrane</location>
        <topology evidence="4">Single-pass membrane protein</topology>
    </subcellularLocation>
</comment>
<comment type="PTM">
    <text>Binds 1 heme c group covalently per subunit.</text>
</comment>
<accession>Q02760</accession>
<protein>
    <recommendedName>
        <fullName>Cytochrome c1</fullName>
    </recommendedName>
</protein>
<feature type="signal peptide">
    <location>
        <begin position="1"/>
        <end position="22"/>
    </location>
</feature>
<feature type="chain" id="PRO_0000006563" description="Cytochrome c1" evidence="3">
    <location>
        <begin position="23"/>
        <end position="285"/>
    </location>
</feature>
<feature type="transmembrane region" description="Helical; Note=Anchors to the membrane" evidence="1">
    <location>
        <begin position="251"/>
        <end position="269"/>
    </location>
</feature>
<feature type="binding site" description="covalent">
    <location>
        <position position="58"/>
    </location>
    <ligand>
        <name>heme c</name>
        <dbReference type="ChEBI" id="CHEBI:61717"/>
    </ligand>
</feature>
<feature type="binding site" description="covalent">
    <location>
        <position position="61"/>
    </location>
    <ligand>
        <name>heme c</name>
        <dbReference type="ChEBI" id="CHEBI:61717"/>
    </ligand>
</feature>
<feature type="binding site" description="axial binding residue">
    <location>
        <position position="62"/>
    </location>
    <ligand>
        <name>heme c</name>
        <dbReference type="ChEBI" id="CHEBI:61717"/>
    </ligand>
    <ligandPart>
        <name>Fe</name>
        <dbReference type="ChEBI" id="CHEBI:18248"/>
    </ligandPart>
</feature>
<feature type="binding site" description="axial binding residue" evidence="2">
    <location>
        <position position="207"/>
    </location>
    <ligand>
        <name>heme c</name>
        <dbReference type="ChEBI" id="CHEBI:61717"/>
    </ligand>
    <ligandPart>
        <name>Fe</name>
        <dbReference type="ChEBI" id="CHEBI:18248"/>
    </ligandPart>
</feature>
<feature type="helix" evidence="6">
    <location>
        <begin position="44"/>
        <end position="56"/>
    </location>
</feature>
<feature type="helix" evidence="6">
    <location>
        <begin position="58"/>
        <end position="60"/>
    </location>
</feature>
<feature type="helix" evidence="6">
    <location>
        <begin position="69"/>
        <end position="72"/>
    </location>
</feature>
<feature type="turn" evidence="6">
    <location>
        <begin position="75"/>
        <end position="78"/>
    </location>
</feature>
<feature type="helix" evidence="6">
    <location>
        <begin position="82"/>
        <end position="88"/>
    </location>
</feature>
<feature type="helix" evidence="6">
    <location>
        <begin position="89"/>
        <end position="91"/>
    </location>
</feature>
<feature type="strand" evidence="6">
    <location>
        <begin position="92"/>
        <end position="95"/>
    </location>
</feature>
<feature type="turn" evidence="6">
    <location>
        <begin position="97"/>
        <end position="99"/>
    </location>
</feature>
<feature type="strand" evidence="6">
    <location>
        <begin position="101"/>
        <end position="104"/>
    </location>
</feature>
<feature type="strand" evidence="7">
    <location>
        <begin position="121"/>
        <end position="124"/>
    </location>
</feature>
<feature type="turn" evidence="6">
    <location>
        <begin position="125"/>
        <end position="127"/>
    </location>
</feature>
<feature type="turn" evidence="7">
    <location>
        <begin position="135"/>
        <end position="138"/>
    </location>
</feature>
<feature type="helix" evidence="6">
    <location>
        <begin position="140"/>
        <end position="145"/>
    </location>
</feature>
<feature type="helix" evidence="6">
    <location>
        <begin position="149"/>
        <end position="158"/>
    </location>
</feature>
<feature type="helix" evidence="6">
    <location>
        <begin position="166"/>
        <end position="168"/>
    </location>
</feature>
<feature type="strand" evidence="6">
    <location>
        <begin position="177"/>
        <end position="181"/>
    </location>
</feature>
<feature type="strand" evidence="6">
    <location>
        <begin position="184"/>
        <end position="186"/>
    </location>
</feature>
<feature type="helix" evidence="6">
    <location>
        <begin position="189"/>
        <end position="191"/>
    </location>
</feature>
<feature type="strand" evidence="6">
    <location>
        <begin position="200"/>
        <end position="207"/>
    </location>
</feature>
<feature type="strand" evidence="5">
    <location>
        <begin position="213"/>
        <end position="216"/>
    </location>
</feature>
<feature type="helix" evidence="6">
    <location>
        <begin position="226"/>
        <end position="241"/>
    </location>
</feature>
<feature type="helix" evidence="6">
    <location>
        <begin position="245"/>
        <end position="275"/>
    </location>
</feature>